<evidence type="ECO:0000255" key="1">
    <source>
        <dbReference type="HAMAP-Rule" id="MF_00532"/>
    </source>
</evidence>
<evidence type="ECO:0000305" key="2"/>
<reference key="1">
    <citation type="submission" date="2002-12" db="EMBL/GenBank/DDBJ databases">
        <title>Complete genome sequence of Vibrio vulnificus CMCP6.</title>
        <authorList>
            <person name="Rhee J.H."/>
            <person name="Kim S.Y."/>
            <person name="Chung S.S."/>
            <person name="Kim J.J."/>
            <person name="Moon Y.H."/>
            <person name="Jeong H."/>
            <person name="Choy H.E."/>
        </authorList>
    </citation>
    <scope>NUCLEOTIDE SEQUENCE [LARGE SCALE GENOMIC DNA]</scope>
    <source>
        <strain>CMCP6</strain>
    </source>
</reference>
<name>RS9_VIBVU</name>
<sequence>MAENQYYGTGRRKSSAARVFIKPGSGNIVINKRALEEYFGRPTSCMVVKQPLELVDMVEKLDLYITVKGGGISGQAGAIRHGITRALMEYDESLRPALRAAGYVTRDARCVERKKVGLRKARRRPQFSKR</sequence>
<protein>
    <recommendedName>
        <fullName evidence="1">Small ribosomal subunit protein uS9</fullName>
    </recommendedName>
    <alternativeName>
        <fullName evidence="2">30S ribosomal protein S9</fullName>
    </alternativeName>
</protein>
<keyword id="KW-0687">Ribonucleoprotein</keyword>
<keyword id="KW-0689">Ribosomal protein</keyword>
<feature type="chain" id="PRO_0000111439" description="Small ribosomal subunit protein uS9">
    <location>
        <begin position="1"/>
        <end position="130"/>
    </location>
</feature>
<gene>
    <name evidence="1" type="primary">rpsI</name>
    <name type="ordered locus">VV1_0598</name>
</gene>
<accession>Q8DEJ0</accession>
<dbReference type="EMBL" id="AE016795">
    <property type="protein sequence ID" value="AAO09114.1"/>
    <property type="molecule type" value="Genomic_DNA"/>
</dbReference>
<dbReference type="RefSeq" id="WP_011078683.1">
    <property type="nucleotide sequence ID" value="NC_004459.3"/>
</dbReference>
<dbReference type="SMR" id="Q8DEJ0"/>
<dbReference type="GeneID" id="93894910"/>
<dbReference type="KEGG" id="vvu:VV1_0598"/>
<dbReference type="HOGENOM" id="CLU_046483_2_1_6"/>
<dbReference type="Proteomes" id="UP000002275">
    <property type="component" value="Chromosome 1"/>
</dbReference>
<dbReference type="GO" id="GO:0022627">
    <property type="term" value="C:cytosolic small ribosomal subunit"/>
    <property type="evidence" value="ECO:0007669"/>
    <property type="project" value="TreeGrafter"/>
</dbReference>
<dbReference type="GO" id="GO:0003723">
    <property type="term" value="F:RNA binding"/>
    <property type="evidence" value="ECO:0007669"/>
    <property type="project" value="TreeGrafter"/>
</dbReference>
<dbReference type="GO" id="GO:0003735">
    <property type="term" value="F:structural constituent of ribosome"/>
    <property type="evidence" value="ECO:0007669"/>
    <property type="project" value="InterPro"/>
</dbReference>
<dbReference type="GO" id="GO:0006412">
    <property type="term" value="P:translation"/>
    <property type="evidence" value="ECO:0007669"/>
    <property type="project" value="UniProtKB-UniRule"/>
</dbReference>
<dbReference type="FunFam" id="3.30.230.10:FF:000001">
    <property type="entry name" value="30S ribosomal protein S9"/>
    <property type="match status" value="1"/>
</dbReference>
<dbReference type="Gene3D" id="3.30.230.10">
    <property type="match status" value="1"/>
</dbReference>
<dbReference type="HAMAP" id="MF_00532_B">
    <property type="entry name" value="Ribosomal_uS9_B"/>
    <property type="match status" value="1"/>
</dbReference>
<dbReference type="InterPro" id="IPR020568">
    <property type="entry name" value="Ribosomal_Su5_D2-typ_SF"/>
</dbReference>
<dbReference type="InterPro" id="IPR000754">
    <property type="entry name" value="Ribosomal_uS9"/>
</dbReference>
<dbReference type="InterPro" id="IPR023035">
    <property type="entry name" value="Ribosomal_uS9_bac/plastid"/>
</dbReference>
<dbReference type="InterPro" id="IPR020574">
    <property type="entry name" value="Ribosomal_uS9_CS"/>
</dbReference>
<dbReference type="InterPro" id="IPR014721">
    <property type="entry name" value="Ribsml_uS5_D2-typ_fold_subgr"/>
</dbReference>
<dbReference type="NCBIfam" id="NF001099">
    <property type="entry name" value="PRK00132.1"/>
    <property type="match status" value="1"/>
</dbReference>
<dbReference type="PANTHER" id="PTHR21569">
    <property type="entry name" value="RIBOSOMAL PROTEIN S9"/>
    <property type="match status" value="1"/>
</dbReference>
<dbReference type="PANTHER" id="PTHR21569:SF1">
    <property type="entry name" value="SMALL RIBOSOMAL SUBUNIT PROTEIN US9M"/>
    <property type="match status" value="1"/>
</dbReference>
<dbReference type="Pfam" id="PF00380">
    <property type="entry name" value="Ribosomal_S9"/>
    <property type="match status" value="1"/>
</dbReference>
<dbReference type="SUPFAM" id="SSF54211">
    <property type="entry name" value="Ribosomal protein S5 domain 2-like"/>
    <property type="match status" value="1"/>
</dbReference>
<dbReference type="PROSITE" id="PS00360">
    <property type="entry name" value="RIBOSOMAL_S9"/>
    <property type="match status" value="1"/>
</dbReference>
<organism>
    <name type="scientific">Vibrio vulnificus (strain CMCP6)</name>
    <dbReference type="NCBI Taxonomy" id="216895"/>
    <lineage>
        <taxon>Bacteria</taxon>
        <taxon>Pseudomonadati</taxon>
        <taxon>Pseudomonadota</taxon>
        <taxon>Gammaproteobacteria</taxon>
        <taxon>Vibrionales</taxon>
        <taxon>Vibrionaceae</taxon>
        <taxon>Vibrio</taxon>
    </lineage>
</organism>
<comment type="similarity">
    <text evidence="1">Belongs to the universal ribosomal protein uS9 family.</text>
</comment>
<proteinExistence type="inferred from homology"/>